<name>SYA_SYNJB</name>
<keyword id="KW-0030">Aminoacyl-tRNA synthetase</keyword>
<keyword id="KW-0067">ATP-binding</keyword>
<keyword id="KW-0963">Cytoplasm</keyword>
<keyword id="KW-0436">Ligase</keyword>
<keyword id="KW-0479">Metal-binding</keyword>
<keyword id="KW-0547">Nucleotide-binding</keyword>
<keyword id="KW-0648">Protein biosynthesis</keyword>
<keyword id="KW-1185">Reference proteome</keyword>
<keyword id="KW-0694">RNA-binding</keyword>
<keyword id="KW-0820">tRNA-binding</keyword>
<keyword id="KW-0862">Zinc</keyword>
<evidence type="ECO:0000255" key="1">
    <source>
        <dbReference type="HAMAP-Rule" id="MF_00036"/>
    </source>
</evidence>
<proteinExistence type="inferred from homology"/>
<reference key="1">
    <citation type="journal article" date="2007" name="ISME J.">
        <title>Population level functional diversity in a microbial community revealed by comparative genomic and metagenomic analyses.</title>
        <authorList>
            <person name="Bhaya D."/>
            <person name="Grossman A.R."/>
            <person name="Steunou A.-S."/>
            <person name="Khuri N."/>
            <person name="Cohan F.M."/>
            <person name="Hamamura N."/>
            <person name="Melendrez M.C."/>
            <person name="Bateson M.M."/>
            <person name="Ward D.M."/>
            <person name="Heidelberg J.F."/>
        </authorList>
    </citation>
    <scope>NUCLEOTIDE SEQUENCE [LARGE SCALE GENOMIC DNA]</scope>
    <source>
        <strain>JA-2-3B'a(2-13)</strain>
    </source>
</reference>
<dbReference type="EC" id="6.1.1.7" evidence="1"/>
<dbReference type="EMBL" id="CP000240">
    <property type="protein sequence ID" value="ABD02487.1"/>
    <property type="molecule type" value="Genomic_DNA"/>
</dbReference>
<dbReference type="RefSeq" id="WP_011433135.1">
    <property type="nucleotide sequence ID" value="NC_007776.1"/>
</dbReference>
<dbReference type="SMR" id="Q2JLC4"/>
<dbReference type="STRING" id="321332.CYB_1521"/>
<dbReference type="KEGG" id="cyb:CYB_1521"/>
<dbReference type="eggNOG" id="COG0013">
    <property type="taxonomic scope" value="Bacteria"/>
</dbReference>
<dbReference type="HOGENOM" id="CLU_004485_1_1_3"/>
<dbReference type="OrthoDB" id="9803884at2"/>
<dbReference type="Proteomes" id="UP000001938">
    <property type="component" value="Chromosome"/>
</dbReference>
<dbReference type="GO" id="GO:0005829">
    <property type="term" value="C:cytosol"/>
    <property type="evidence" value="ECO:0007669"/>
    <property type="project" value="TreeGrafter"/>
</dbReference>
<dbReference type="GO" id="GO:0004813">
    <property type="term" value="F:alanine-tRNA ligase activity"/>
    <property type="evidence" value="ECO:0007669"/>
    <property type="project" value="UniProtKB-UniRule"/>
</dbReference>
<dbReference type="GO" id="GO:0002161">
    <property type="term" value="F:aminoacyl-tRNA deacylase activity"/>
    <property type="evidence" value="ECO:0007669"/>
    <property type="project" value="TreeGrafter"/>
</dbReference>
<dbReference type="GO" id="GO:0005524">
    <property type="term" value="F:ATP binding"/>
    <property type="evidence" value="ECO:0007669"/>
    <property type="project" value="UniProtKB-UniRule"/>
</dbReference>
<dbReference type="GO" id="GO:0000049">
    <property type="term" value="F:tRNA binding"/>
    <property type="evidence" value="ECO:0007669"/>
    <property type="project" value="UniProtKB-KW"/>
</dbReference>
<dbReference type="GO" id="GO:0008270">
    <property type="term" value="F:zinc ion binding"/>
    <property type="evidence" value="ECO:0007669"/>
    <property type="project" value="UniProtKB-UniRule"/>
</dbReference>
<dbReference type="GO" id="GO:0006419">
    <property type="term" value="P:alanyl-tRNA aminoacylation"/>
    <property type="evidence" value="ECO:0007669"/>
    <property type="project" value="UniProtKB-UniRule"/>
</dbReference>
<dbReference type="CDD" id="cd00673">
    <property type="entry name" value="AlaRS_core"/>
    <property type="match status" value="1"/>
</dbReference>
<dbReference type="FunFam" id="2.40.30.130:FF:000001">
    <property type="entry name" value="Alanine--tRNA ligase"/>
    <property type="match status" value="1"/>
</dbReference>
<dbReference type="FunFam" id="3.10.310.40:FF:000001">
    <property type="entry name" value="Alanine--tRNA ligase"/>
    <property type="match status" value="1"/>
</dbReference>
<dbReference type="FunFam" id="3.30.54.20:FF:000001">
    <property type="entry name" value="Alanine--tRNA ligase"/>
    <property type="match status" value="1"/>
</dbReference>
<dbReference type="FunFam" id="3.30.930.10:FF:000004">
    <property type="entry name" value="Alanine--tRNA ligase"/>
    <property type="match status" value="1"/>
</dbReference>
<dbReference type="FunFam" id="3.30.980.10:FF:000004">
    <property type="entry name" value="Alanine--tRNA ligase, cytoplasmic"/>
    <property type="match status" value="1"/>
</dbReference>
<dbReference type="Gene3D" id="2.40.30.130">
    <property type="match status" value="1"/>
</dbReference>
<dbReference type="Gene3D" id="3.10.310.40">
    <property type="match status" value="1"/>
</dbReference>
<dbReference type="Gene3D" id="3.30.54.20">
    <property type="match status" value="1"/>
</dbReference>
<dbReference type="Gene3D" id="6.10.250.550">
    <property type="match status" value="1"/>
</dbReference>
<dbReference type="Gene3D" id="3.30.930.10">
    <property type="entry name" value="Bira Bifunctional Protein, Domain 2"/>
    <property type="match status" value="1"/>
</dbReference>
<dbReference type="Gene3D" id="3.30.980.10">
    <property type="entry name" value="Threonyl-trna Synthetase, Chain A, domain 2"/>
    <property type="match status" value="1"/>
</dbReference>
<dbReference type="HAMAP" id="MF_00036_B">
    <property type="entry name" value="Ala_tRNA_synth_B"/>
    <property type="match status" value="1"/>
</dbReference>
<dbReference type="InterPro" id="IPR045864">
    <property type="entry name" value="aa-tRNA-synth_II/BPL/LPL"/>
</dbReference>
<dbReference type="InterPro" id="IPR002318">
    <property type="entry name" value="Ala-tRNA-lgiase_IIc"/>
</dbReference>
<dbReference type="InterPro" id="IPR018162">
    <property type="entry name" value="Ala-tRNA-ligase_IIc_anticod-bd"/>
</dbReference>
<dbReference type="InterPro" id="IPR018165">
    <property type="entry name" value="Ala-tRNA-synth_IIc_core"/>
</dbReference>
<dbReference type="InterPro" id="IPR018164">
    <property type="entry name" value="Ala-tRNA-synth_IIc_N"/>
</dbReference>
<dbReference type="InterPro" id="IPR050058">
    <property type="entry name" value="Ala-tRNA_ligase"/>
</dbReference>
<dbReference type="InterPro" id="IPR023033">
    <property type="entry name" value="Ala_tRNA_ligase_euk/bac"/>
</dbReference>
<dbReference type="InterPro" id="IPR003156">
    <property type="entry name" value="DHHA1_dom"/>
</dbReference>
<dbReference type="InterPro" id="IPR018163">
    <property type="entry name" value="Thr/Ala-tRNA-synth_IIc_edit"/>
</dbReference>
<dbReference type="InterPro" id="IPR009000">
    <property type="entry name" value="Transl_B-barrel_sf"/>
</dbReference>
<dbReference type="InterPro" id="IPR012947">
    <property type="entry name" value="tRNA_SAD"/>
</dbReference>
<dbReference type="NCBIfam" id="TIGR00344">
    <property type="entry name" value="alaS"/>
    <property type="match status" value="1"/>
</dbReference>
<dbReference type="PANTHER" id="PTHR11777:SF9">
    <property type="entry name" value="ALANINE--TRNA LIGASE, CYTOPLASMIC"/>
    <property type="match status" value="1"/>
</dbReference>
<dbReference type="PANTHER" id="PTHR11777">
    <property type="entry name" value="ALANYL-TRNA SYNTHETASE"/>
    <property type="match status" value="1"/>
</dbReference>
<dbReference type="Pfam" id="PF02272">
    <property type="entry name" value="DHHA1"/>
    <property type="match status" value="1"/>
</dbReference>
<dbReference type="Pfam" id="PF01411">
    <property type="entry name" value="tRNA-synt_2c"/>
    <property type="match status" value="1"/>
</dbReference>
<dbReference type="Pfam" id="PF07973">
    <property type="entry name" value="tRNA_SAD"/>
    <property type="match status" value="1"/>
</dbReference>
<dbReference type="PRINTS" id="PR00980">
    <property type="entry name" value="TRNASYNTHALA"/>
</dbReference>
<dbReference type="SMART" id="SM00863">
    <property type="entry name" value="tRNA_SAD"/>
    <property type="match status" value="1"/>
</dbReference>
<dbReference type="SUPFAM" id="SSF55681">
    <property type="entry name" value="Class II aaRS and biotin synthetases"/>
    <property type="match status" value="1"/>
</dbReference>
<dbReference type="SUPFAM" id="SSF101353">
    <property type="entry name" value="Putative anticodon-binding domain of alanyl-tRNA synthetase (AlaRS)"/>
    <property type="match status" value="1"/>
</dbReference>
<dbReference type="SUPFAM" id="SSF55186">
    <property type="entry name" value="ThrRS/AlaRS common domain"/>
    <property type="match status" value="1"/>
</dbReference>
<dbReference type="SUPFAM" id="SSF50447">
    <property type="entry name" value="Translation proteins"/>
    <property type="match status" value="1"/>
</dbReference>
<dbReference type="PROSITE" id="PS50860">
    <property type="entry name" value="AA_TRNA_LIGASE_II_ALA"/>
    <property type="match status" value="1"/>
</dbReference>
<comment type="function">
    <text evidence="1">Catalyzes the attachment of alanine to tRNA(Ala) in a two-step reaction: alanine is first activated by ATP to form Ala-AMP and then transferred to the acceptor end of tRNA(Ala). Also edits incorrectly charged Ser-tRNA(Ala) and Gly-tRNA(Ala) via its editing domain.</text>
</comment>
<comment type="catalytic activity">
    <reaction evidence="1">
        <text>tRNA(Ala) + L-alanine + ATP = L-alanyl-tRNA(Ala) + AMP + diphosphate</text>
        <dbReference type="Rhea" id="RHEA:12540"/>
        <dbReference type="Rhea" id="RHEA-COMP:9657"/>
        <dbReference type="Rhea" id="RHEA-COMP:9923"/>
        <dbReference type="ChEBI" id="CHEBI:30616"/>
        <dbReference type="ChEBI" id="CHEBI:33019"/>
        <dbReference type="ChEBI" id="CHEBI:57972"/>
        <dbReference type="ChEBI" id="CHEBI:78442"/>
        <dbReference type="ChEBI" id="CHEBI:78497"/>
        <dbReference type="ChEBI" id="CHEBI:456215"/>
        <dbReference type="EC" id="6.1.1.7"/>
    </reaction>
</comment>
<comment type="cofactor">
    <cofactor evidence="1">
        <name>Zn(2+)</name>
        <dbReference type="ChEBI" id="CHEBI:29105"/>
    </cofactor>
    <text evidence="1">Binds 1 zinc ion per subunit.</text>
</comment>
<comment type="subcellular location">
    <subcellularLocation>
        <location evidence="1">Cytoplasm</location>
    </subcellularLocation>
</comment>
<comment type="domain">
    <text evidence="1">Consists of three domains; the N-terminal catalytic domain, the editing domain and the C-terminal C-Ala domain. The editing domain removes incorrectly charged amino acids, while the C-Ala domain, along with tRNA(Ala), serves as a bridge to cooperatively bring together the editing and aminoacylation centers thus stimulating deacylation of misacylated tRNAs.</text>
</comment>
<comment type="similarity">
    <text evidence="1">Belongs to the class-II aminoacyl-tRNA synthetase family.</text>
</comment>
<organism>
    <name type="scientific">Synechococcus sp. (strain JA-2-3B'a(2-13))</name>
    <name type="common">Cyanobacteria bacterium Yellowstone B-Prime</name>
    <dbReference type="NCBI Taxonomy" id="321332"/>
    <lineage>
        <taxon>Bacteria</taxon>
        <taxon>Bacillati</taxon>
        <taxon>Cyanobacteriota</taxon>
        <taxon>Cyanophyceae</taxon>
        <taxon>Synechococcales</taxon>
        <taxon>Synechococcaceae</taxon>
        <taxon>Synechococcus</taxon>
    </lineage>
</organism>
<protein>
    <recommendedName>
        <fullName evidence="1">Alanine--tRNA ligase</fullName>
        <ecNumber evidence="1">6.1.1.7</ecNumber>
    </recommendedName>
    <alternativeName>
        <fullName evidence="1">Alanyl-tRNA synthetase</fullName>
        <shortName evidence="1">AlaRS</shortName>
    </alternativeName>
</protein>
<sequence>MFPALSGAAIRQTFLDFYAQRGHQVLPSASLVPEDPTVLLTIAGMLPFKPIFLGQRDPEYPRVTTAQKCVRTNDIENVGRTARHHTFFEMLGNFSFGDYFKKEAIAWAWELVTEVFGLPPERLVVSVFREDEEAFALWRDEIGIPAHRIQRMGEADNFWAAGPTGPCGPCSEIYYDFKPELGDERIDLEDDSRFLEIYNLVFMELNRDSEGHLMPLAKQNIDTGLGLERLAQVLQGVPNNYETDLIFPIIQTAAGIAGLNYSKANPEQQISLKVIGDHARAVMHLIADGVLPSNVDRGYVLRRLIRRMVRHGRLLGIGEPFTIPVIETAIQLAEAAYPQVRERETLIKTELQREEEQFLKTLERGERLLLDLFTAVESSRRDSSSPKQISGADAFKLFDTYGFPLELTQEIAQEHGFSVDLEGFEQEMEKQRQRARAAHQTIDLTAQGSLDELADFLSQTEFLGYSQSSARGVVEALLVEGKSVPQVEAGQAVQVVLDRTPFYAEAGGQIGDRGYLSGDGLLVRIEDVQKQGDLFVHFGRVERGILRVGDPVQAQIDLACRRRAQAHHTATHLLQAALKRIVDPSIGQAGSLVAFDRLRFDFTLSRPVTPEELEQIENLVNTWIAEAHAAQVAIMPLAEAKARGAVAMFGEKYGAEVRVIDFPGVSMELCGGTHVNNTAEIGLFKIIAETGVAAGIRRIEAVAGPAVLEYLNERDRVVRELSAQFKAKPQELPERVAALQAELKAAQKELEEVRSQLALLQAEGLLAQAVAVADLKVLVAELGSTTPEALKTAAEHLLHKLGEGAVVLGSVPEAGKVSLVAAFSPAVQQLGLKAGSFIGEIAKLTGGGGGGRPNLAQAGGKQPEKLAEALQVARERLQAELISR</sequence>
<feature type="chain" id="PRO_0000347840" description="Alanine--tRNA ligase">
    <location>
        <begin position="1"/>
        <end position="884"/>
    </location>
</feature>
<feature type="binding site" evidence="1">
    <location>
        <position position="568"/>
    </location>
    <ligand>
        <name>Zn(2+)</name>
        <dbReference type="ChEBI" id="CHEBI:29105"/>
    </ligand>
</feature>
<feature type="binding site" evidence="1">
    <location>
        <position position="572"/>
    </location>
    <ligand>
        <name>Zn(2+)</name>
        <dbReference type="ChEBI" id="CHEBI:29105"/>
    </ligand>
</feature>
<feature type="binding site" evidence="1">
    <location>
        <position position="670"/>
    </location>
    <ligand>
        <name>Zn(2+)</name>
        <dbReference type="ChEBI" id="CHEBI:29105"/>
    </ligand>
</feature>
<feature type="binding site" evidence="1">
    <location>
        <position position="674"/>
    </location>
    <ligand>
        <name>Zn(2+)</name>
        <dbReference type="ChEBI" id="CHEBI:29105"/>
    </ligand>
</feature>
<accession>Q2JLC4</accession>
<gene>
    <name evidence="1" type="primary">alaS</name>
    <name type="ordered locus">CYB_1521</name>
</gene>